<accession>P59667</accession>
<comment type="function">
    <text evidence="2 4">Receptor for glucocorticoids (GC). Has a dual mode of action: as a transcription factor that binds to glucocorticoid response elements (GRE), both for nuclear and mitochondrial DNA, and as a modulator of other transcription factors. Affects inflammatory responses, cellular proliferation and differentiation in target tissues. Involved in chromatin remodeling. Plays a role in rapid mRNA degradation by binding to the 5' UTR of target mRNAs and interacting with PNRC2 in a ligand-dependent manner which recruits the RNA helicase UPF1 and the mRNA-decapping enzyme DCP1A, leading to RNA decay. Could act as a coactivator for STAT5-dependent transcription upon growth hormone (GH) stimulation and could reveal an essential role of hepatic GR in the control of body growth. Mediates glucocorticoid-induced apoptosis. Promotes accurate chromosome segregation during mitosis. May act as a tumor suppressor. May play a negative role in adipogenesis through the regulation of lipolytic and antilipogenic gene expression.</text>
</comment>
<comment type="subunit">
    <text evidence="2 3 4 8">Heteromultimeric cytoplasmic complex with HSP90AA1, HSPA1A/HSPA1B, and FKBP5 or another immunophilin such as PPID, STIP1, or the immunophilin homolog PPP5C (PubMed:9195923). Upon ligand binding FKBP5 dissociates from the complex and FKBP4 takes its place, thereby linking the complex to dynein and mediating transport to the nucleus, where the complex dissociates (PubMed:9195923). Probably forms a complex composed of chaperones HSP90 and HSP70, co-chaperones CDC37, PPP5C, TSC1 and client protein TSC2, CDK4, AKT, RAF1 and NR3C1; this complex does not contain co-chaperones STIP1/HOP and PTGES3/p23 (By similarity). Directly interacts with UNC45A (By similarity). Binds to DNA as a homodimer, and as heterodimer with NR3C2 or the retinoid X receptor (By similarity). Binds STAT5A and STAT5B homodimers and heterodimers (By similarity). Interacts with NRIP1, POU2F1, POU2F2 and TRIM28 (By similarity). Interacts with several coactivator complexes, including the SMARCA4 complex, CREBBP/EP300, TADA2L (Ada complex) and p160 coactivators such as NCOA2 and NCOA6 (By similarity). Interaction with BAG1 inhibits transactivation (By similarity). Interacts with HEXIM1 and TGFB1I1 (By similarity). Interacts with NCOA1 (By similarity). Interacts with NCOA3, SMARCA4, SMARCC1, SMARCD1, and SMARCE1 (By similarity). Interacts with CLOCK, CRY1 and CRY2 in a ligand-dependent fashion (By similarity). Interacts with CIART (By similarity). Interacts with RWDD3 (By similarity). Interacts with UBE2I/UBC9 and this interaction is enhanced in the presence of RWDD3 (By similarity). Interacts with GRIP1 (By similarity). Interacts with NR4A3 (via nuclear receptor DNA-binding domain), represses transcription activity of NR4A3 on the POMC promoter Nur response element (NurRE) (By similarity). Directly interacts with PNRC2 to attract and form a complex with UPF1 and DCP1A; the interaction leads to rapid mRNA degradation (By similarity). Interacts with GSK3B (By similarity). Interacts with FNIP1 and FNIP2 (By similarity). Interacts (via C-terminus) with HNRNPU (via C-terminus) (By similarity). Interacts with MCM3AP (By similarity). Interacts (via domain NR LBD) with HSP90AA1 and HSP90AB1 (By similarity). In the absence of hormonal ligand, interacts with TACC1 (By similarity). Interacts (via NR LBD domain) with ZNF764 (via KRAB domain); the interaction regulates transcription factor activity of NR3C1 by directing its actions toward certain biologic pathways (By similarity).</text>
</comment>
<comment type="subcellular location">
    <subcellularLocation>
        <location evidence="2">Cytoplasm</location>
    </subcellularLocation>
    <subcellularLocation>
        <location evidence="2">Nucleus</location>
    </subcellularLocation>
    <subcellularLocation>
        <location evidence="2">Mitochondrion</location>
    </subcellularLocation>
    <subcellularLocation>
        <location evidence="2">Cytoplasm</location>
        <location evidence="2">Cytoskeleton</location>
        <location evidence="2">Spindle</location>
    </subcellularLocation>
    <subcellularLocation>
        <location evidence="2">Cytoplasm</location>
        <location evidence="2">Cytoskeleton</location>
        <location evidence="2">Microtubule organizing center</location>
        <location evidence="2">Centrosome</location>
    </subcellularLocation>
    <subcellularLocation>
        <location evidence="4">Chromosome</location>
    </subcellularLocation>
    <subcellularLocation>
        <location evidence="4">Nucleus</location>
        <location evidence="4">Nucleoplasm</location>
    </subcellularLocation>
    <text evidence="2 4">After ligand activation, translocates from the cytoplasm to the nucleus (By similarity). The hormone-occupied receptor undergoes rapid exchange between chromatin and the nucleoplasmic compartment. In the presence of NR1D1 shows a time-dependent subcellular localization, localizing to the cytoplasm at ZT8 and to the nucleus at ZT20. Lacks this diurnal pattern of localization in the absence of NR1D1, localizing to both nucleus and the cytoplasm at ZT8 and ZT20. Upon dexamethasone binding associates with the glucocorticoid response elements of target genes (By similarity).</text>
</comment>
<comment type="domain">
    <text evidence="2">Composed of three domains: a modulating N-terminal domain, a DNA-binding domain and a C-terminal ligand-binding domain. The ligand-binding domain is required for correct chromosome segregation during mitosis although ligand binding is not required.</text>
</comment>
<comment type="PTM">
    <text evidence="1">Acetylation by CLOCK reduces its binding to glucocorticoid response elements and its transcriptional activity.</text>
</comment>
<comment type="PTM">
    <text evidence="2">Increased proteasome-mediated degradation in response to glucocorticoids.</text>
</comment>
<comment type="PTM">
    <text evidence="2 4">Phosphorylated in the absence of hormone; becomes hyperphosphorylated in the presence of glucocorticoid. The Ser-203, Ser-226 and Ser-399-phosphorylated forms are mainly cytoplasmic, and the Ser-211-phosphorylated form is nuclear. Phosphorylation at Ser-211 increases transcriptional activity. Phosphorylation at Ser-203, Ser-226 and Ser-399 decreases signaling capacity. Phosphorylation at Ser-399 may protect from glucocorticoid-induced apoptosis. Phosphorylation at Ser-203 and Ser-211 is not required in regulation of chromosome segregation. May be dephosphorylated by PPP5C, attenuates NR3C1 action.</text>
</comment>
<comment type="PTM">
    <text evidence="4">Ubiquitinated by UBR5, leading to its degradation: UBR5 specifically recognizes and binds ligand-bound NR3C1 when it is not associated with coactivators (NCOAs) (By similarity). In presence of NCOAs, the UBR5-degron is not accessible, preventing its ubiquitination and degradation (By similarity).</text>
</comment>
<comment type="PTM">
    <text evidence="3">Sumoylation at Lys-277 and Lys-293 negatively regulates its transcriptional activity. Sumoylation at Lys-698 positively regulates its transcriptional activity in the presence of RWDD3. Sumoylation at Lys-277 and Lys-293 is dispensable whereas sumoylation at Lys-698 is critical for the stimulatory effect of RWDD3 on its transcriptional activity. Heat shock increases sumoylation in a RWDD3-dependent manner.</text>
</comment>
<comment type="similarity">
    <text evidence="9">Belongs to the nuclear hormone receptor family. NR3 subfamily.</text>
</comment>
<organism>
    <name type="scientific">Oryctolagus cuniculus</name>
    <name type="common">Rabbit</name>
    <dbReference type="NCBI Taxonomy" id="9986"/>
    <lineage>
        <taxon>Eukaryota</taxon>
        <taxon>Metazoa</taxon>
        <taxon>Chordata</taxon>
        <taxon>Craniata</taxon>
        <taxon>Vertebrata</taxon>
        <taxon>Euteleostomi</taxon>
        <taxon>Mammalia</taxon>
        <taxon>Eutheria</taxon>
        <taxon>Euarchontoglires</taxon>
        <taxon>Glires</taxon>
        <taxon>Lagomorpha</taxon>
        <taxon>Leporidae</taxon>
        <taxon>Oryctolagus</taxon>
    </lineage>
</organism>
<feature type="chain" id="PRO_0000053673" description="Glucocorticoid receptor">
    <location>
        <begin position="1"/>
        <end position="772"/>
    </location>
</feature>
<feature type="domain" description="NR LBD" evidence="6">
    <location>
        <begin position="519"/>
        <end position="753"/>
    </location>
</feature>
<feature type="DNA-binding region" description="Nuclear receptor" evidence="5">
    <location>
        <begin position="416"/>
        <end position="481"/>
    </location>
</feature>
<feature type="zinc finger region" description="NR C4-type" evidence="5">
    <location>
        <begin position="416"/>
        <end position="436"/>
    </location>
</feature>
<feature type="zinc finger region" description="NR C4-type" evidence="5">
    <location>
        <begin position="452"/>
        <end position="476"/>
    </location>
</feature>
<feature type="region of interest" description="Modulating">
    <location>
        <begin position="1"/>
        <end position="415"/>
    </location>
</feature>
<feature type="region of interest" description="Disordered" evidence="7">
    <location>
        <begin position="1"/>
        <end position="22"/>
    </location>
</feature>
<feature type="region of interest" description="Disordered" evidence="7">
    <location>
        <begin position="39"/>
        <end position="82"/>
    </location>
</feature>
<feature type="region of interest" description="Disordered" evidence="7">
    <location>
        <begin position="132"/>
        <end position="186"/>
    </location>
</feature>
<feature type="region of interest" description="Interaction with CLOCK" evidence="1">
    <location>
        <begin position="480"/>
        <end position="772"/>
    </location>
</feature>
<feature type="region of interest" description="Hinge">
    <location>
        <begin position="482"/>
        <end position="518"/>
    </location>
</feature>
<feature type="region of interest" description="Disordered" evidence="7">
    <location>
        <begin position="494"/>
        <end position="513"/>
    </location>
</feature>
<feature type="region of interest" description="Interaction with CRY1" evidence="1">
    <location>
        <begin position="527"/>
        <end position="692"/>
    </location>
</feature>
<feature type="compositionally biased region" description="Basic and acidic residues" evidence="7">
    <location>
        <begin position="1"/>
        <end position="15"/>
    </location>
</feature>
<feature type="compositionally biased region" description="Low complexity" evidence="7">
    <location>
        <begin position="44"/>
        <end position="58"/>
    </location>
</feature>
<feature type="compositionally biased region" description="Low complexity" evidence="7">
    <location>
        <begin position="143"/>
        <end position="156"/>
    </location>
</feature>
<feature type="compositionally biased region" description="Basic and acidic residues" evidence="7">
    <location>
        <begin position="158"/>
        <end position="170"/>
    </location>
</feature>
<feature type="compositionally biased region" description="Polar residues" evidence="7">
    <location>
        <begin position="499"/>
        <end position="513"/>
    </location>
</feature>
<feature type="modified residue" description="Omega-N-methylarginine" evidence="4">
    <location>
        <position position="25"/>
    </location>
</feature>
<feature type="modified residue" description="Phosphoserine" evidence="2">
    <location>
        <position position="47"/>
    </location>
</feature>
<feature type="modified residue" description="Phosphoserine" evidence="4">
    <location>
        <position position="115"/>
    </location>
</feature>
<feature type="modified residue" description="Phosphoserine" evidence="2">
    <location>
        <position position="136"/>
    </location>
</feature>
<feature type="modified residue" description="Phosphoserine" evidence="4">
    <location>
        <position position="143"/>
    </location>
</feature>
<feature type="modified residue" description="Phosphoserine" evidence="2">
    <location>
        <position position="203"/>
    </location>
</feature>
<feature type="modified residue" description="Phosphoserine" evidence="2">
    <location>
        <position position="211"/>
    </location>
</feature>
<feature type="modified residue" description="Phosphoserine" evidence="2">
    <location>
        <position position="226"/>
    </location>
</feature>
<feature type="modified residue" description="Phosphoserine" evidence="4">
    <location>
        <position position="307"/>
    </location>
</feature>
<feature type="modified residue" description="Phosphoserine" evidence="2">
    <location>
        <position position="400"/>
    </location>
</feature>
<feature type="modified residue" description="N6-acetyllysine" evidence="2">
    <location>
        <position position="475"/>
    </location>
</feature>
<feature type="modified residue" description="N6-acetyllysine" evidence="2">
    <location>
        <position position="487"/>
    </location>
</feature>
<feature type="modified residue" description="N6-acetyllysine" evidence="2">
    <location>
        <position position="489"/>
    </location>
</feature>
<feature type="modified residue" description="N6-acetyllysine" evidence="2">
    <location>
        <position position="490"/>
    </location>
</feature>
<feature type="cross-link" description="Glycyl lysine isopeptide (Lys-Gly) (interchain with G-Cter in SUMO2)" evidence="2">
    <location>
        <position position="258"/>
    </location>
</feature>
<feature type="cross-link" description="Glycyl lysine isopeptide (Lys-Gly) (interchain with G-Cter in SUMO); alternate" evidence="2">
    <location>
        <position position="277"/>
    </location>
</feature>
<feature type="cross-link" description="Glycyl lysine isopeptide (Lys-Gly) (interchain with G-Cter in SUMO2); alternate" evidence="2">
    <location>
        <position position="277"/>
    </location>
</feature>
<feature type="cross-link" description="Glycyl lysine isopeptide (Lys-Gly) (interchain with G-Cter in SUMO); alternate" evidence="2">
    <location>
        <position position="293"/>
    </location>
</feature>
<feature type="cross-link" description="Glycyl lysine isopeptide (Lys-Gly) (interchain with G-Cter in SUMO2); alternate" evidence="2">
    <location>
        <position position="293"/>
    </location>
</feature>
<feature type="cross-link" description="Glycyl lysine isopeptide (Lys-Gly) (interchain with G-Cter in ubiquitin)" evidence="4">
    <location>
        <position position="414"/>
    </location>
</feature>
<feature type="cross-link" description="Glycyl lysine isopeptide (Lys-Gly) (interchain with G-Cter in SUMO)" evidence="2">
    <location>
        <position position="698"/>
    </location>
</feature>
<protein>
    <recommendedName>
        <fullName>Glucocorticoid receptor</fullName>
        <shortName>GR</shortName>
    </recommendedName>
    <alternativeName>
        <fullName>Nuclear receptor subfamily 3 group C member 1</fullName>
    </alternativeName>
</protein>
<keyword id="KW-0007">Acetylation</keyword>
<keyword id="KW-0156">Chromatin regulator</keyword>
<keyword id="KW-0158">Chromosome</keyword>
<keyword id="KW-0963">Cytoplasm</keyword>
<keyword id="KW-0206">Cytoskeleton</keyword>
<keyword id="KW-0238">DNA-binding</keyword>
<keyword id="KW-1017">Isopeptide bond</keyword>
<keyword id="KW-0446">Lipid-binding</keyword>
<keyword id="KW-0479">Metal-binding</keyword>
<keyword id="KW-0488">Methylation</keyword>
<keyword id="KW-0496">Mitochondrion</keyword>
<keyword id="KW-0539">Nucleus</keyword>
<keyword id="KW-0597">Phosphoprotein</keyword>
<keyword id="KW-0675">Receptor</keyword>
<keyword id="KW-1185">Reference proteome</keyword>
<keyword id="KW-0754">Steroid-binding</keyword>
<keyword id="KW-0804">Transcription</keyword>
<keyword id="KW-0805">Transcription regulation</keyword>
<keyword id="KW-0832">Ubl conjugation</keyword>
<keyword id="KW-0862">Zinc</keyword>
<keyword id="KW-0863">Zinc-finger</keyword>
<dbReference type="EMBL" id="AY161275">
    <property type="protein sequence ID" value="AAN75442.1"/>
    <property type="molecule type" value="mRNA"/>
</dbReference>
<dbReference type="RefSeq" id="NP_001075616.1">
    <property type="nucleotide sequence ID" value="NM_001082147.1"/>
</dbReference>
<dbReference type="SMR" id="P59667"/>
<dbReference type="BioGRID" id="1171913">
    <property type="interactions" value="1"/>
</dbReference>
<dbReference type="FunCoup" id="P59667">
    <property type="interactions" value="352"/>
</dbReference>
<dbReference type="STRING" id="9986.ENSOCUP00000046838"/>
<dbReference type="PaxDb" id="9986-ENSOCUP00000010039"/>
<dbReference type="GeneID" id="100008890"/>
<dbReference type="KEGG" id="ocu:100008890"/>
<dbReference type="CTD" id="2908"/>
<dbReference type="eggNOG" id="KOG3575">
    <property type="taxonomic scope" value="Eukaryota"/>
</dbReference>
<dbReference type="InParanoid" id="P59667"/>
<dbReference type="OrthoDB" id="5789523at2759"/>
<dbReference type="Proteomes" id="UP000001811">
    <property type="component" value="Unplaced"/>
</dbReference>
<dbReference type="GO" id="GO:0005813">
    <property type="term" value="C:centrosome"/>
    <property type="evidence" value="ECO:0007669"/>
    <property type="project" value="UniProtKB-SubCell"/>
</dbReference>
<dbReference type="GO" id="GO:0005694">
    <property type="term" value="C:chromosome"/>
    <property type="evidence" value="ECO:0007669"/>
    <property type="project" value="UniProtKB-SubCell"/>
</dbReference>
<dbReference type="GO" id="GO:0005737">
    <property type="term" value="C:cytoplasm"/>
    <property type="evidence" value="ECO:0000250"/>
    <property type="project" value="UniProtKB"/>
</dbReference>
<dbReference type="GO" id="GO:0005739">
    <property type="term" value="C:mitochondrion"/>
    <property type="evidence" value="ECO:0007669"/>
    <property type="project" value="UniProtKB-SubCell"/>
</dbReference>
<dbReference type="GO" id="GO:0016607">
    <property type="term" value="C:nuclear speck"/>
    <property type="evidence" value="ECO:0000250"/>
    <property type="project" value="UniProtKB"/>
</dbReference>
<dbReference type="GO" id="GO:0005634">
    <property type="term" value="C:nucleus"/>
    <property type="evidence" value="ECO:0000250"/>
    <property type="project" value="UniProtKB"/>
</dbReference>
<dbReference type="GO" id="GO:0005819">
    <property type="term" value="C:spindle"/>
    <property type="evidence" value="ECO:0007669"/>
    <property type="project" value="UniProtKB-SubCell"/>
</dbReference>
<dbReference type="GO" id="GO:0003700">
    <property type="term" value="F:DNA-binding transcription factor activity"/>
    <property type="evidence" value="ECO:0000250"/>
    <property type="project" value="UniProtKB"/>
</dbReference>
<dbReference type="GO" id="GO:0004883">
    <property type="term" value="F:nuclear glucocorticoid receptor activity"/>
    <property type="evidence" value="ECO:0007669"/>
    <property type="project" value="InterPro"/>
</dbReference>
<dbReference type="GO" id="GO:0004879">
    <property type="term" value="F:nuclear receptor activity"/>
    <property type="evidence" value="ECO:0000250"/>
    <property type="project" value="UniProtKB"/>
</dbReference>
<dbReference type="GO" id="GO:0043565">
    <property type="term" value="F:sequence-specific DNA binding"/>
    <property type="evidence" value="ECO:0007669"/>
    <property type="project" value="InterPro"/>
</dbReference>
<dbReference type="GO" id="GO:0005496">
    <property type="term" value="F:steroid binding"/>
    <property type="evidence" value="ECO:0000250"/>
    <property type="project" value="UniProtKB"/>
</dbReference>
<dbReference type="GO" id="GO:1990239">
    <property type="term" value="F:steroid hormone binding"/>
    <property type="evidence" value="ECO:0000250"/>
    <property type="project" value="UniProtKB"/>
</dbReference>
<dbReference type="GO" id="GO:0008270">
    <property type="term" value="F:zinc ion binding"/>
    <property type="evidence" value="ECO:0007669"/>
    <property type="project" value="UniProtKB-KW"/>
</dbReference>
<dbReference type="GO" id="GO:0071385">
    <property type="term" value="P:cellular response to glucocorticoid stimulus"/>
    <property type="evidence" value="ECO:0000250"/>
    <property type="project" value="UniProtKB"/>
</dbReference>
<dbReference type="GO" id="GO:0071383">
    <property type="term" value="P:cellular response to steroid hormone stimulus"/>
    <property type="evidence" value="ECO:0000250"/>
    <property type="project" value="UniProtKB"/>
</dbReference>
<dbReference type="GO" id="GO:0006325">
    <property type="term" value="P:chromatin organization"/>
    <property type="evidence" value="ECO:0007669"/>
    <property type="project" value="UniProtKB-KW"/>
</dbReference>
<dbReference type="GO" id="GO:0045944">
    <property type="term" value="P:positive regulation of transcription by RNA polymerase II"/>
    <property type="evidence" value="ECO:0000250"/>
    <property type="project" value="UniProtKB"/>
</dbReference>
<dbReference type="CDD" id="cd07172">
    <property type="entry name" value="NR_DBD_GR_PR"/>
    <property type="match status" value="1"/>
</dbReference>
<dbReference type="CDD" id="cd07076">
    <property type="entry name" value="NR_LBD_GR"/>
    <property type="match status" value="1"/>
</dbReference>
<dbReference type="FunFam" id="1.10.565.10:FF:000004">
    <property type="entry name" value="Androgen receptor variant"/>
    <property type="match status" value="1"/>
</dbReference>
<dbReference type="FunFam" id="3.30.50.10:FF:000022">
    <property type="entry name" value="glucocorticoid receptor isoform X1"/>
    <property type="match status" value="1"/>
</dbReference>
<dbReference type="Gene3D" id="3.30.50.10">
    <property type="entry name" value="Erythroid Transcription Factor GATA-1, subunit A"/>
    <property type="match status" value="1"/>
</dbReference>
<dbReference type="Gene3D" id="1.10.565.10">
    <property type="entry name" value="Retinoid X Receptor"/>
    <property type="match status" value="1"/>
</dbReference>
<dbReference type="InterPro" id="IPR001409">
    <property type="entry name" value="Glcrtcd_rcpt"/>
</dbReference>
<dbReference type="InterPro" id="IPR035500">
    <property type="entry name" value="NHR-like_dom_sf"/>
</dbReference>
<dbReference type="InterPro" id="IPR000536">
    <property type="entry name" value="Nucl_hrmn_rcpt_lig-bd"/>
</dbReference>
<dbReference type="InterPro" id="IPR050200">
    <property type="entry name" value="Nuclear_hormone_rcpt_NR3"/>
</dbReference>
<dbReference type="InterPro" id="IPR001723">
    <property type="entry name" value="Nuclear_hrmn_rcpt"/>
</dbReference>
<dbReference type="InterPro" id="IPR001628">
    <property type="entry name" value="Znf_hrmn_rcpt"/>
</dbReference>
<dbReference type="InterPro" id="IPR013088">
    <property type="entry name" value="Znf_NHR/GATA"/>
</dbReference>
<dbReference type="PANTHER" id="PTHR48092">
    <property type="entry name" value="KNIRPS-RELATED PROTEIN-RELATED"/>
    <property type="match status" value="1"/>
</dbReference>
<dbReference type="Pfam" id="PF02155">
    <property type="entry name" value="GCR"/>
    <property type="match status" value="1"/>
</dbReference>
<dbReference type="Pfam" id="PF00104">
    <property type="entry name" value="Hormone_recep"/>
    <property type="match status" value="1"/>
</dbReference>
<dbReference type="Pfam" id="PF00105">
    <property type="entry name" value="zf-C4"/>
    <property type="match status" value="1"/>
</dbReference>
<dbReference type="PRINTS" id="PR00528">
    <property type="entry name" value="GLCORTICOIDR"/>
</dbReference>
<dbReference type="PRINTS" id="PR00398">
    <property type="entry name" value="STRDHORMONER"/>
</dbReference>
<dbReference type="PRINTS" id="PR00047">
    <property type="entry name" value="STROIDFINGER"/>
</dbReference>
<dbReference type="SMART" id="SM00430">
    <property type="entry name" value="HOLI"/>
    <property type="match status" value="1"/>
</dbReference>
<dbReference type="SMART" id="SM00399">
    <property type="entry name" value="ZnF_C4"/>
    <property type="match status" value="1"/>
</dbReference>
<dbReference type="SUPFAM" id="SSF57716">
    <property type="entry name" value="Glucocorticoid receptor-like (DNA-binding domain)"/>
    <property type="match status" value="1"/>
</dbReference>
<dbReference type="SUPFAM" id="SSF48508">
    <property type="entry name" value="Nuclear receptor ligand-binding domain"/>
    <property type="match status" value="1"/>
</dbReference>
<dbReference type="PROSITE" id="PS51843">
    <property type="entry name" value="NR_LBD"/>
    <property type="match status" value="1"/>
</dbReference>
<dbReference type="PROSITE" id="PS00031">
    <property type="entry name" value="NUCLEAR_REC_DBD_1"/>
    <property type="match status" value="1"/>
</dbReference>
<dbReference type="PROSITE" id="PS51030">
    <property type="entry name" value="NUCLEAR_REC_DBD_2"/>
    <property type="match status" value="1"/>
</dbReference>
<gene>
    <name type="primary">NR3C1</name>
    <name type="synonym">GRL</name>
</gene>
<proteinExistence type="evidence at protein level"/>
<sequence>MDSKESLSPPGREEVPSSVLRPAERGNVMDLYKTLRGGAPVRVPASSPSLAPAAQPDSKQQRLAVDFPKGSASNAQQPDLSRAVSLSMGLYMGETETKVMGSDLAFPQQGQTSLSSGETDFRLLEESIASLNRSASGADNPRSTAPAAGSAAPTEGFPKTHSDLASERQNPKGQTGGSAGSAKLHPTDQSTFDILQDLEFSGSPSKDRSESPWRSDLLMDENCLLSPLAGEDDPFLLEGNSSEDCKPLILPDTKPKIKDNGDLILSNSNNVPLPQVKTEKEDFIELCTPGVIKQEKLGPVYCQASFSGANIIGNKISAISVHGVSTSGGQMYHYDMNAQQQEQKPLFNVIPPIPVGSENWNRCQGSGDDNLTSLGTMNFPGRSVFSNGYSSPGMRPDVSSPPSNSTTAAGPPPKLCLVCSDEASGCHYGVLTCGSCKVFFKRAVKGQHNYLCAGRNDCIIDKIRRKNCPACRYRKCLQAGMNLEARKTKKKIKGIQQTSTGVSQETSENPSNRTVVPAALPQLTPTLVSLLEVIEPEVLYAGYDSSVPDSTWRIMTTLNMLGGRQVIAAVKWAKAIPGFRNLHLDDQMTLLQYSWMFLMAFALGWRSYKQSSGNMLCFAPDLVINEQRMTLPYMYDQCKHMLFVSSELKRLQVSYEEYLCMKTLLLLSTVPKEGLKSQELFDEIRMTYIKELGKAIVKREGNSSQNWQRFYQLTKLLDSMHEVVENLLHYCFQTFLDKTMSIEFPEMLAEIITNQIPKYSNGNIKKLLFHQK</sequence>
<evidence type="ECO:0000250" key="1"/>
<evidence type="ECO:0000250" key="2">
    <source>
        <dbReference type="UniProtKB" id="P04150"/>
    </source>
</evidence>
<evidence type="ECO:0000250" key="3">
    <source>
        <dbReference type="UniProtKB" id="P06536"/>
    </source>
</evidence>
<evidence type="ECO:0000250" key="4">
    <source>
        <dbReference type="UniProtKB" id="P06537"/>
    </source>
</evidence>
<evidence type="ECO:0000255" key="5">
    <source>
        <dbReference type="PROSITE-ProRule" id="PRU00407"/>
    </source>
</evidence>
<evidence type="ECO:0000255" key="6">
    <source>
        <dbReference type="PROSITE-ProRule" id="PRU01189"/>
    </source>
</evidence>
<evidence type="ECO:0000256" key="7">
    <source>
        <dbReference type="SAM" id="MobiDB-lite"/>
    </source>
</evidence>
<evidence type="ECO:0000269" key="8">
    <source>
    </source>
</evidence>
<evidence type="ECO:0000305" key="9"/>
<name>GCR_RABIT</name>
<reference key="1">
    <citation type="submission" date="2002-10" db="EMBL/GenBank/DDBJ databases">
        <title>Rabbit glucocorticoid receptor from lens epithelial cells.</title>
        <authorList>
            <person name="James E.R."/>
            <person name="Robertson L.L."/>
        </authorList>
    </citation>
    <scope>NUCLEOTIDE SEQUENCE [MRNA]</scope>
    <source>
        <tissue>Lens epithelium</tissue>
    </source>
</reference>
<reference key="2">
    <citation type="journal article" date="1997" name="J. Biol. Chem.">
        <title>Protein phosphatase 5 is a major component of glucocorticoid receptor.hsp90 complexes with properties of an FK506-binding immunophilin.</title>
        <authorList>
            <person name="Silverstein A.M."/>
            <person name="Galigniana M.D."/>
            <person name="Chen M.S."/>
            <person name="Owens-Grillo J.K."/>
            <person name="Chinkers M."/>
            <person name="Pratt W.B."/>
        </authorList>
    </citation>
    <scope>IDENTIFICATION IN A COMPLEX WITH NR3C1 AND FKBP4; PPID; PPP5C OR STIP1</scope>
</reference>